<comment type="function">
    <text evidence="1">This is one of the proteins that bind and probably mediate the attachment of the 5S RNA into the large ribosomal subunit, where it forms part of the central protuberance. In the 70S ribosome it contacts protein S13 of the 30S subunit (bridge B1b), connecting the 2 subunits; this bridge is implicated in subunit movement. Contacts the P site tRNA; the 5S rRNA and some of its associated proteins might help stabilize positioning of ribosome-bound tRNAs.</text>
</comment>
<comment type="subunit">
    <text evidence="1">Part of the 50S ribosomal subunit; part of the 5S rRNA/L5/L18/L25 subcomplex. Contacts the 5S rRNA and the P site tRNA. Forms a bridge to the 30S subunit in the 70S ribosome.</text>
</comment>
<comment type="similarity">
    <text evidence="1">Belongs to the universal ribosomal protein uL5 family.</text>
</comment>
<feature type="chain" id="PRO_0000242969" description="Large ribosomal subunit protein uL5">
    <location>
        <begin position="1"/>
        <end position="185"/>
    </location>
</feature>
<name>RL5_BACFR</name>
<organism>
    <name type="scientific">Bacteroides fragilis (strain YCH46)</name>
    <dbReference type="NCBI Taxonomy" id="295405"/>
    <lineage>
        <taxon>Bacteria</taxon>
        <taxon>Pseudomonadati</taxon>
        <taxon>Bacteroidota</taxon>
        <taxon>Bacteroidia</taxon>
        <taxon>Bacteroidales</taxon>
        <taxon>Bacteroidaceae</taxon>
        <taxon>Bacteroides</taxon>
    </lineage>
</organism>
<dbReference type="EMBL" id="AP006841">
    <property type="protein sequence ID" value="BAD50912.1"/>
    <property type="molecule type" value="Genomic_DNA"/>
</dbReference>
<dbReference type="RefSeq" id="WP_005791556.1">
    <property type="nucleotide sequence ID" value="NZ_UYXF01000007.1"/>
</dbReference>
<dbReference type="RefSeq" id="YP_101446.1">
    <property type="nucleotide sequence ID" value="NC_006347.1"/>
</dbReference>
<dbReference type="SMR" id="Q64NM0"/>
<dbReference type="STRING" id="295405.BF4169"/>
<dbReference type="GeneID" id="60367776"/>
<dbReference type="KEGG" id="bfr:BF4169"/>
<dbReference type="PATRIC" id="fig|295405.11.peg.4023"/>
<dbReference type="HOGENOM" id="CLU_061015_2_1_10"/>
<dbReference type="OrthoDB" id="9806626at2"/>
<dbReference type="Proteomes" id="UP000002197">
    <property type="component" value="Chromosome"/>
</dbReference>
<dbReference type="GO" id="GO:1990904">
    <property type="term" value="C:ribonucleoprotein complex"/>
    <property type="evidence" value="ECO:0007669"/>
    <property type="project" value="UniProtKB-KW"/>
</dbReference>
<dbReference type="GO" id="GO:0005840">
    <property type="term" value="C:ribosome"/>
    <property type="evidence" value="ECO:0007669"/>
    <property type="project" value="UniProtKB-KW"/>
</dbReference>
<dbReference type="GO" id="GO:0019843">
    <property type="term" value="F:rRNA binding"/>
    <property type="evidence" value="ECO:0007669"/>
    <property type="project" value="UniProtKB-UniRule"/>
</dbReference>
<dbReference type="GO" id="GO:0003735">
    <property type="term" value="F:structural constituent of ribosome"/>
    <property type="evidence" value="ECO:0007669"/>
    <property type="project" value="InterPro"/>
</dbReference>
<dbReference type="GO" id="GO:0000049">
    <property type="term" value="F:tRNA binding"/>
    <property type="evidence" value="ECO:0007669"/>
    <property type="project" value="UniProtKB-UniRule"/>
</dbReference>
<dbReference type="GO" id="GO:0006412">
    <property type="term" value="P:translation"/>
    <property type="evidence" value="ECO:0007669"/>
    <property type="project" value="UniProtKB-UniRule"/>
</dbReference>
<dbReference type="FunFam" id="3.30.1440.10:FF:000001">
    <property type="entry name" value="50S ribosomal protein L5"/>
    <property type="match status" value="1"/>
</dbReference>
<dbReference type="Gene3D" id="3.30.1440.10">
    <property type="match status" value="1"/>
</dbReference>
<dbReference type="HAMAP" id="MF_01333_B">
    <property type="entry name" value="Ribosomal_uL5_B"/>
    <property type="match status" value="1"/>
</dbReference>
<dbReference type="InterPro" id="IPR002132">
    <property type="entry name" value="Ribosomal_uL5"/>
</dbReference>
<dbReference type="InterPro" id="IPR020930">
    <property type="entry name" value="Ribosomal_uL5_bac-type"/>
</dbReference>
<dbReference type="InterPro" id="IPR031309">
    <property type="entry name" value="Ribosomal_uL5_C"/>
</dbReference>
<dbReference type="InterPro" id="IPR022803">
    <property type="entry name" value="Ribosomal_uL5_dom_sf"/>
</dbReference>
<dbReference type="InterPro" id="IPR031310">
    <property type="entry name" value="Ribosomal_uL5_N"/>
</dbReference>
<dbReference type="NCBIfam" id="NF000585">
    <property type="entry name" value="PRK00010.1"/>
    <property type="match status" value="1"/>
</dbReference>
<dbReference type="PANTHER" id="PTHR11994">
    <property type="entry name" value="60S RIBOSOMAL PROTEIN L11-RELATED"/>
    <property type="match status" value="1"/>
</dbReference>
<dbReference type="Pfam" id="PF00281">
    <property type="entry name" value="Ribosomal_L5"/>
    <property type="match status" value="1"/>
</dbReference>
<dbReference type="Pfam" id="PF00673">
    <property type="entry name" value="Ribosomal_L5_C"/>
    <property type="match status" value="1"/>
</dbReference>
<dbReference type="PIRSF" id="PIRSF002161">
    <property type="entry name" value="Ribosomal_L5"/>
    <property type="match status" value="1"/>
</dbReference>
<dbReference type="SUPFAM" id="SSF55282">
    <property type="entry name" value="RL5-like"/>
    <property type="match status" value="1"/>
</dbReference>
<reference key="1">
    <citation type="journal article" date="2004" name="Proc. Natl. Acad. Sci. U.S.A.">
        <title>Genomic analysis of Bacteroides fragilis reveals extensive DNA inversions regulating cell surface adaptation.</title>
        <authorList>
            <person name="Kuwahara T."/>
            <person name="Yamashita A."/>
            <person name="Hirakawa H."/>
            <person name="Nakayama H."/>
            <person name="Toh H."/>
            <person name="Okada N."/>
            <person name="Kuhara S."/>
            <person name="Hattori M."/>
            <person name="Hayashi T."/>
            <person name="Ohnishi Y."/>
        </authorList>
    </citation>
    <scope>NUCLEOTIDE SEQUENCE [LARGE SCALE GENOMIC DNA]</scope>
    <source>
        <strain>YCH46</strain>
    </source>
</reference>
<evidence type="ECO:0000255" key="1">
    <source>
        <dbReference type="HAMAP-Rule" id="MF_01333"/>
    </source>
</evidence>
<evidence type="ECO:0000305" key="2"/>
<gene>
    <name evidence="1" type="primary">rplE</name>
    <name type="ordered locus">BF4169</name>
</gene>
<keyword id="KW-0687">Ribonucleoprotein</keyword>
<keyword id="KW-0689">Ribosomal protein</keyword>
<keyword id="KW-0694">RNA-binding</keyword>
<keyword id="KW-0699">rRNA-binding</keyword>
<keyword id="KW-0820">tRNA-binding</keyword>
<sequence>MSNTASLKKEYAERIAPALKSQFQYSSTMQIPVLKKIVINQGLGMAVADKKIIEVAINEMTAITGQKAVATISRKDIANFKLRKKMPIGVMVTLRRERMYEFLEKLVRVALPRIRDFKGIETKFDGKGNYTLGIQEQIIFPEINIDSITRILGMNITFVTSAQTDEEGYALLKEFGLPFKNAKKD</sequence>
<proteinExistence type="inferred from homology"/>
<protein>
    <recommendedName>
        <fullName evidence="1">Large ribosomal subunit protein uL5</fullName>
    </recommendedName>
    <alternativeName>
        <fullName evidence="2">50S ribosomal protein L5</fullName>
    </alternativeName>
</protein>
<accession>Q64NM0</accession>